<keyword id="KW-0002">3D-structure</keyword>
<keyword id="KW-0963">Cytoplasm</keyword>
<keyword id="KW-0521">NADP</keyword>
<keyword id="KW-0560">Oxidoreductase</keyword>
<keyword id="KW-1185">Reference proteome</keyword>
<protein>
    <recommendedName>
        <fullName evidence="6">Cinnamoyl-CoA reductase CAD2</fullName>
        <ecNumber evidence="3">1.2.1.44</ecNumber>
    </recommendedName>
    <alternativeName>
        <fullName evidence="4">Cinnamyl alcohol dehydrogenase 2</fullName>
        <shortName evidence="4">Mt-CAD2</shortName>
    </alternativeName>
    <alternativeName>
        <fullName evidence="6">Coumaroyl-CoA reductase</fullName>
    </alternativeName>
    <alternativeName>
        <fullName evidence="6">Feruloyl-CoA reductase</fullName>
    </alternativeName>
    <alternativeName>
        <fullName evidence="6">Sinapoyl-CoA reductase</fullName>
    </alternativeName>
</protein>
<sequence>MSSSNLGNVVCVTGASGYIASWLVRLLLHRGYTVKATVRDPNDPKKVDHLVKLDGAKERLQLFKANLLEEGAFDSVVQGCHGVFHTASPFYHDVKDPQAELIDPALKGTLNVLNSCAKSPSLKRVVLTSSIAAVAYNGKPRTPDVVVDETWFTDADFCAKSNLWYVVSKTLAEEAAWKFVKENNIDMVTINPAMVIGPLLQPVLNTSAAAILNLINGAQTFPNASFGWVNVKDVANAHILAYENASASGRHCLVERVAHYSEVVRILRELYPSLQLPEKCADDKPYVPIYQVSKEKAKSLGLEYTPLEVSIKETVESLKEKKFANL</sequence>
<name>CAD2_MEDTR</name>
<feature type="chain" id="PRO_0000457413" description="Cinnamoyl-CoA reductase CAD2">
    <location>
        <begin position="1"/>
        <end position="326"/>
    </location>
</feature>
<feature type="active site" description="Proton donor" evidence="6">
    <location>
        <position position="169"/>
    </location>
</feature>
<feature type="binding site" evidence="6">
    <location>
        <begin position="14"/>
        <end position="20"/>
    </location>
    <ligand>
        <name>NADP(+)</name>
        <dbReference type="ChEBI" id="CHEBI:58349"/>
    </ligand>
</feature>
<feature type="binding site" evidence="6">
    <location>
        <position position="39"/>
    </location>
    <ligand>
        <name>NADP(+)</name>
        <dbReference type="ChEBI" id="CHEBI:58349"/>
    </ligand>
</feature>
<feature type="binding site" evidence="6">
    <location>
        <position position="46"/>
    </location>
    <ligand>
        <name>NADP(+)</name>
        <dbReference type="ChEBI" id="CHEBI:58349"/>
    </ligand>
</feature>
<feature type="binding site" evidence="6">
    <location>
        <begin position="66"/>
        <end position="67"/>
    </location>
    <ligand>
        <name>NADP(+)</name>
        <dbReference type="ChEBI" id="CHEBI:58349"/>
    </ligand>
</feature>
<feature type="binding site" evidence="6">
    <location>
        <begin position="86"/>
        <end position="88"/>
    </location>
    <ligand>
        <name>NADP(+)</name>
        <dbReference type="ChEBI" id="CHEBI:58349"/>
    </ligand>
</feature>
<feature type="binding site" evidence="6">
    <location>
        <position position="130"/>
    </location>
    <ligand>
        <name>(E)-coniferaldehyde</name>
        <dbReference type="ChEBI" id="CHEBI:16547"/>
    </ligand>
</feature>
<feature type="binding site" evidence="6">
    <location>
        <position position="136"/>
    </location>
    <ligand>
        <name>(E)-coniferaldehyde</name>
        <dbReference type="ChEBI" id="CHEBI:16547"/>
    </ligand>
</feature>
<feature type="binding site" evidence="6">
    <location>
        <position position="141"/>
    </location>
    <ligand>
        <name>(E)-coniferaldehyde</name>
        <dbReference type="ChEBI" id="CHEBI:16547"/>
    </ligand>
</feature>
<feature type="binding site" evidence="6">
    <location>
        <position position="165"/>
    </location>
    <ligand>
        <name>(E)-coniferaldehyde</name>
        <dbReference type="ChEBI" id="CHEBI:16547"/>
    </ligand>
</feature>
<feature type="binding site" evidence="6">
    <location>
        <position position="165"/>
    </location>
    <ligand>
        <name>NADP(+)</name>
        <dbReference type="ChEBI" id="CHEBI:58349"/>
    </ligand>
</feature>
<feature type="binding site" evidence="6">
    <location>
        <position position="169"/>
    </location>
    <ligand>
        <name>NADP(+)</name>
        <dbReference type="ChEBI" id="CHEBI:58349"/>
    </ligand>
</feature>
<feature type="binding site" evidence="6">
    <location>
        <begin position="192"/>
        <end position="195"/>
    </location>
    <ligand>
        <name>NADP(+)</name>
        <dbReference type="ChEBI" id="CHEBI:58349"/>
    </ligand>
</feature>
<feature type="binding site" evidence="6">
    <location>
        <position position="194"/>
    </location>
    <ligand>
        <name>(E)-coniferaldehyde</name>
        <dbReference type="ChEBI" id="CHEBI:16547"/>
    </ligand>
</feature>
<feature type="binding site" evidence="6">
    <location>
        <position position="207"/>
    </location>
    <ligand>
        <name>(E)-coniferaldehyde</name>
        <dbReference type="ChEBI" id="CHEBI:16547"/>
    </ligand>
</feature>
<feature type="binding site" evidence="6">
    <location>
        <position position="207"/>
    </location>
    <ligand>
        <name>NADP(+)</name>
        <dbReference type="ChEBI" id="CHEBI:58349"/>
    </ligand>
</feature>
<feature type="binding site" evidence="6">
    <location>
        <position position="226"/>
    </location>
    <ligand>
        <name>(E)-coniferaldehyde</name>
        <dbReference type="ChEBI" id="CHEBI:16547"/>
    </ligand>
</feature>
<feature type="binding site" evidence="6">
    <location>
        <position position="257"/>
    </location>
    <ligand>
        <name>(E)-coniferaldehyde</name>
        <dbReference type="ChEBI" id="CHEBI:16547"/>
    </ligand>
</feature>
<feature type="binding site" evidence="6">
    <location>
        <position position="290"/>
    </location>
    <ligand>
        <name>(E)-coniferaldehyde</name>
        <dbReference type="ChEBI" id="CHEBI:16547"/>
    </ligand>
</feature>
<feature type="mutagenesis site" description="Impaired activity." evidence="3">
    <original>S</original>
    <variation>A</variation>
    <location>
        <position position="130"/>
    </location>
</feature>
<feature type="mutagenesis site" description="Increase activity with sinapaldehyde as substrate. Strongly increase activity with sinapaldehyde as substrate; when associated with A-226." evidence="3">
    <original>Y</original>
    <variation>F</variation>
    <location>
        <position position="136"/>
    </location>
</feature>
<feature type="mutagenesis site" description="Impaired activity." evidence="3">
    <original>Y</original>
    <variation>A</variation>
    <variation>F</variation>
    <location>
        <position position="165"/>
    </location>
</feature>
<feature type="mutagenesis site" description="Impaired activity." evidence="3">
    <original>K</original>
    <variation>A</variation>
    <location>
        <position position="169"/>
    </location>
</feature>
<feature type="mutagenesis site" description="Increase activity with sinapaldehyde as substrate. Strongly increase activity with sinapaldehyde as substrate; when associated with F-136." evidence="3">
    <original>F</original>
    <variation>A</variation>
    <location>
        <position position="226"/>
    </location>
</feature>
<feature type="sequence conflict" description="In Ref. 4; ACJ85556." evidence="5" ref="4">
    <original>Q</original>
    <variation>R</variation>
    <location>
        <position position="98"/>
    </location>
</feature>
<feature type="sequence conflict" description="In Ref. 4; ACJ85556." evidence="5" ref="4">
    <original>P</original>
    <variation>S</variation>
    <location>
        <position position="120"/>
    </location>
</feature>
<feature type="sequence conflict" description="In Ref. 5; AFK47262." evidence="5" ref="5">
    <original>D</original>
    <variation>G</variation>
    <location>
        <position position="148"/>
    </location>
</feature>
<feature type="strand" evidence="9">
    <location>
        <begin position="9"/>
        <end position="12"/>
    </location>
</feature>
<feature type="turn" evidence="9">
    <location>
        <begin position="13"/>
        <end position="16"/>
    </location>
</feature>
<feature type="helix" evidence="9">
    <location>
        <begin position="18"/>
        <end position="29"/>
    </location>
</feature>
<feature type="strand" evidence="9">
    <location>
        <begin position="33"/>
        <end position="39"/>
    </location>
</feature>
<feature type="helix" evidence="9">
    <location>
        <begin position="44"/>
        <end position="46"/>
    </location>
</feature>
<feature type="helix" evidence="9">
    <location>
        <begin position="48"/>
        <end position="51"/>
    </location>
</feature>
<feature type="helix" evidence="9">
    <location>
        <begin position="56"/>
        <end position="59"/>
    </location>
</feature>
<feature type="strand" evidence="9">
    <location>
        <begin position="60"/>
        <end position="64"/>
    </location>
</feature>
<feature type="turn" evidence="9">
    <location>
        <begin position="70"/>
        <end position="73"/>
    </location>
</feature>
<feature type="helix" evidence="9">
    <location>
        <begin position="74"/>
        <end position="77"/>
    </location>
</feature>
<feature type="strand" evidence="9">
    <location>
        <begin position="81"/>
        <end position="85"/>
    </location>
</feature>
<feature type="helix" evidence="9">
    <location>
        <begin position="97"/>
        <end position="100"/>
    </location>
</feature>
<feature type="helix" evidence="9">
    <location>
        <begin position="102"/>
        <end position="117"/>
    </location>
</feature>
<feature type="strand" evidence="9">
    <location>
        <begin position="124"/>
        <end position="128"/>
    </location>
</feature>
<feature type="helix" evidence="9">
    <location>
        <begin position="131"/>
        <end position="133"/>
    </location>
</feature>
<feature type="helix" evidence="9">
    <location>
        <begin position="155"/>
        <end position="159"/>
    </location>
</feature>
<feature type="turn" evidence="9">
    <location>
        <begin position="160"/>
        <end position="162"/>
    </location>
</feature>
<feature type="helix" evidence="9">
    <location>
        <begin position="164"/>
        <end position="182"/>
    </location>
</feature>
<feature type="strand" evidence="9">
    <location>
        <begin position="187"/>
        <end position="197"/>
    </location>
</feature>
<feature type="strand" evidence="9">
    <location>
        <begin position="200"/>
        <end position="202"/>
    </location>
</feature>
<feature type="helix" evidence="9">
    <location>
        <begin position="206"/>
        <end position="215"/>
    </location>
</feature>
<feature type="strand" evidence="9">
    <location>
        <begin position="219"/>
        <end position="221"/>
    </location>
</feature>
<feature type="strand" evidence="9">
    <location>
        <begin position="225"/>
        <end position="230"/>
    </location>
</feature>
<feature type="helix" evidence="9">
    <location>
        <begin position="231"/>
        <end position="243"/>
    </location>
</feature>
<feature type="strand" evidence="9">
    <location>
        <begin position="249"/>
        <end position="253"/>
    </location>
</feature>
<feature type="strand" evidence="9">
    <location>
        <begin position="255"/>
        <end position="259"/>
    </location>
</feature>
<feature type="helix" evidence="9">
    <location>
        <begin position="260"/>
        <end position="270"/>
    </location>
</feature>
<feature type="strand" evidence="9">
    <location>
        <begin position="279"/>
        <end position="284"/>
    </location>
</feature>
<feature type="helix" evidence="9">
    <location>
        <begin position="295"/>
        <end position="299"/>
    </location>
</feature>
<feature type="helix" evidence="9">
    <location>
        <begin position="307"/>
        <end position="320"/>
    </location>
</feature>
<dbReference type="EC" id="1.2.1.44" evidence="3"/>
<dbReference type="EMBL" id="CM001219">
    <property type="protein sequence ID" value="AES68253.1"/>
    <property type="molecule type" value="Genomic_DNA"/>
</dbReference>
<dbReference type="EMBL" id="PSQE01000003">
    <property type="protein sequence ID" value="RHN65187.1"/>
    <property type="molecule type" value="Genomic_DNA"/>
</dbReference>
<dbReference type="EMBL" id="BT052894">
    <property type="protein sequence ID" value="ACJ85556.1"/>
    <property type="molecule type" value="mRNA"/>
</dbReference>
<dbReference type="EMBL" id="BT147468">
    <property type="protein sequence ID" value="AFK47262.1"/>
    <property type="molecule type" value="mRNA"/>
</dbReference>
<dbReference type="RefSeq" id="XP_003598002.1">
    <property type="nucleotide sequence ID" value="XM_003597954.2"/>
</dbReference>
<dbReference type="PDB" id="4QTZ">
    <property type="method" value="X-ray"/>
    <property type="resolution" value="2.00 A"/>
    <property type="chains" value="A=6-326"/>
</dbReference>
<dbReference type="PDB" id="4QUK">
    <property type="method" value="X-ray"/>
    <property type="resolution" value="1.90 A"/>
    <property type="chains" value="A=8-326"/>
</dbReference>
<dbReference type="PDBsum" id="4QTZ"/>
<dbReference type="PDBsum" id="4QUK"/>
<dbReference type="SMR" id="G7IYC1"/>
<dbReference type="STRING" id="3880.G7IYC1"/>
<dbReference type="PaxDb" id="3880-AES68253"/>
<dbReference type="EnsemblPlants" id="rna13004">
    <property type="protein sequence ID" value="RHN65187.1"/>
    <property type="gene ID" value="gene13004"/>
</dbReference>
<dbReference type="GeneID" id="11427940"/>
<dbReference type="Gramene" id="rna13004">
    <property type="protein sequence ID" value="RHN65187.1"/>
    <property type="gene ID" value="gene13004"/>
</dbReference>
<dbReference type="KEGG" id="mtr:11427940"/>
<dbReference type="eggNOG" id="KOG1502">
    <property type="taxonomic scope" value="Eukaryota"/>
</dbReference>
<dbReference type="OMA" id="QGQMKEK"/>
<dbReference type="OrthoDB" id="2735536at2759"/>
<dbReference type="UniPathway" id="UPA00711"/>
<dbReference type="EvolutionaryTrace" id="G7IYC1"/>
<dbReference type="Proteomes" id="UP000002051">
    <property type="component" value="Chromosome 3"/>
</dbReference>
<dbReference type="Proteomes" id="UP000265566">
    <property type="component" value="Chromosome 3"/>
</dbReference>
<dbReference type="ExpressionAtlas" id="G7IYC1">
    <property type="expression patterns" value="differential"/>
</dbReference>
<dbReference type="GO" id="GO:0005737">
    <property type="term" value="C:cytoplasm"/>
    <property type="evidence" value="ECO:0007669"/>
    <property type="project" value="UniProtKB-SubCell"/>
</dbReference>
<dbReference type="GO" id="GO:0045551">
    <property type="term" value="F:cinnamyl-alcohol dehydrogenase activity"/>
    <property type="evidence" value="ECO:0007669"/>
    <property type="project" value="UniProtKB-EC"/>
</dbReference>
<dbReference type="GO" id="GO:0016616">
    <property type="term" value="F:oxidoreductase activity, acting on the CH-OH group of donors, NAD or NADP as acceptor"/>
    <property type="evidence" value="ECO:0000318"/>
    <property type="project" value="GO_Central"/>
</dbReference>
<dbReference type="GO" id="GO:0009699">
    <property type="term" value="P:phenylpropanoid biosynthetic process"/>
    <property type="evidence" value="ECO:0007669"/>
    <property type="project" value="UniProtKB-UniPathway"/>
</dbReference>
<dbReference type="CDD" id="cd08958">
    <property type="entry name" value="FR_SDR_e"/>
    <property type="match status" value="1"/>
</dbReference>
<dbReference type="FunFam" id="3.40.50.720:FF:000085">
    <property type="entry name" value="Dihydroflavonol reductase"/>
    <property type="match status" value="1"/>
</dbReference>
<dbReference type="Gene3D" id="3.40.50.720">
    <property type="entry name" value="NAD(P)-binding Rossmann-like Domain"/>
    <property type="match status" value="1"/>
</dbReference>
<dbReference type="InterPro" id="IPR001509">
    <property type="entry name" value="Epimerase_deHydtase"/>
</dbReference>
<dbReference type="InterPro" id="IPR036291">
    <property type="entry name" value="NAD(P)-bd_dom_sf"/>
</dbReference>
<dbReference type="InterPro" id="IPR050425">
    <property type="entry name" value="NAD(P)_dehydrat-like"/>
</dbReference>
<dbReference type="PANTHER" id="PTHR10366:SF852">
    <property type="entry name" value="CINNAMOYL-COA REDUCTASE CAD2"/>
    <property type="match status" value="1"/>
</dbReference>
<dbReference type="PANTHER" id="PTHR10366">
    <property type="entry name" value="NAD DEPENDENT EPIMERASE/DEHYDRATASE"/>
    <property type="match status" value="1"/>
</dbReference>
<dbReference type="Pfam" id="PF01370">
    <property type="entry name" value="Epimerase"/>
    <property type="match status" value="1"/>
</dbReference>
<dbReference type="SUPFAM" id="SSF51735">
    <property type="entry name" value="NAD(P)-binding Rossmann-fold domains"/>
    <property type="match status" value="1"/>
</dbReference>
<proteinExistence type="evidence at protein level"/>
<evidence type="ECO:0000250" key="1">
    <source>
        <dbReference type="UniProtKB" id="A0A059TC02"/>
    </source>
</evidence>
<evidence type="ECO:0000250" key="2">
    <source>
        <dbReference type="UniProtKB" id="Q9S9N9"/>
    </source>
</evidence>
<evidence type="ECO:0000269" key="3">
    <source>
    </source>
</evidence>
<evidence type="ECO:0000303" key="4">
    <source>
    </source>
</evidence>
<evidence type="ECO:0000305" key="5"/>
<evidence type="ECO:0000305" key="6">
    <source>
    </source>
</evidence>
<evidence type="ECO:0000312" key="7">
    <source>
        <dbReference type="EMBL" id="AES68253.1"/>
    </source>
</evidence>
<evidence type="ECO:0000312" key="8">
    <source>
        <dbReference type="EMBL" id="RHN65187.1"/>
    </source>
</evidence>
<evidence type="ECO:0007829" key="9">
    <source>
        <dbReference type="PDB" id="4QUK"/>
    </source>
</evidence>
<comment type="function">
    <text evidence="1 3">Involved in lignin biosynthesis (By similarity). Regulates the monolignol composition by catalyzing the conversion of cinnamoyl-CoAs into their corresponding cinnamaldehydes (By similarity). Can use coumaraldehyde and coniferaldehyde as substrates, but barely sinapaldehyde (PubMed:25217505).</text>
</comment>
<comment type="catalytic activity">
    <reaction evidence="2">
        <text>(E)-cinnamaldehyde + NADP(+) + CoA = (E)-cinnamoyl-CoA + NADPH + H(+)</text>
        <dbReference type="Rhea" id="RHEA:10620"/>
        <dbReference type="ChEBI" id="CHEBI:15378"/>
        <dbReference type="ChEBI" id="CHEBI:16731"/>
        <dbReference type="ChEBI" id="CHEBI:57252"/>
        <dbReference type="ChEBI" id="CHEBI:57287"/>
        <dbReference type="ChEBI" id="CHEBI:57783"/>
        <dbReference type="ChEBI" id="CHEBI:58349"/>
        <dbReference type="EC" id="1.2.1.44"/>
    </reaction>
    <physiologicalReaction direction="right-to-left" evidence="2">
        <dbReference type="Rhea" id="RHEA:10622"/>
    </physiologicalReaction>
</comment>
<comment type="catalytic activity">
    <reaction evidence="3">
        <text>(E)-coniferaldehyde + NADP(+) + CoA = (E)-feruloyl-CoA + NADPH + H(+)</text>
        <dbReference type="Rhea" id="RHEA:64648"/>
        <dbReference type="ChEBI" id="CHEBI:15378"/>
        <dbReference type="ChEBI" id="CHEBI:16547"/>
        <dbReference type="ChEBI" id="CHEBI:57287"/>
        <dbReference type="ChEBI" id="CHEBI:57783"/>
        <dbReference type="ChEBI" id="CHEBI:58349"/>
        <dbReference type="ChEBI" id="CHEBI:87305"/>
        <dbReference type="EC" id="1.2.1.44"/>
    </reaction>
    <physiologicalReaction direction="left-to-right" evidence="3">
        <dbReference type="Rhea" id="RHEA:64649"/>
    </physiologicalReaction>
</comment>
<comment type="catalytic activity">
    <reaction evidence="3">
        <text>(E)-4-coumaraldehyde + NADP(+) + CoA = (E)-4-coumaroyl-CoA + NADPH + H(+)</text>
        <dbReference type="Rhea" id="RHEA:64652"/>
        <dbReference type="ChEBI" id="CHEBI:15378"/>
        <dbReference type="ChEBI" id="CHEBI:28353"/>
        <dbReference type="ChEBI" id="CHEBI:57287"/>
        <dbReference type="ChEBI" id="CHEBI:57783"/>
        <dbReference type="ChEBI" id="CHEBI:58349"/>
        <dbReference type="ChEBI" id="CHEBI:85008"/>
        <dbReference type="EC" id="1.2.1.44"/>
    </reaction>
    <physiologicalReaction direction="left-to-right" evidence="3">
        <dbReference type="Rhea" id="RHEA:64653"/>
    </physiologicalReaction>
</comment>
<comment type="biophysicochemical properties">
    <kinetics>
        <KM evidence="3">9.4 uM for coumaraldehyde (at pH 6.25 and 30 degrees Celsius)</KM>
        <KM evidence="3">6.6 uM for coniferaldehyde (at pH 6.25 and 30 degrees Celsius)</KM>
        <KM evidence="3">730 uM for sinapaldehyde (at pH 6.25 and 30 degrees Celsius)</KM>
        <Vmax evidence="3">119.0 nmol/sec/mg enzyme with coumaraldehyde as substrate (at pH 6.25 and 30 degrees Celsius)</Vmax>
        <Vmax evidence="3">27.3 nmol/sec/mg enzyme with coniferaldehyde as substrate (at pH 6.25 and 30 degrees Celsius)</Vmax>
        <Vmax evidence="3">0.64 nmol/sec/mg enzyme with sinapaldehyde as substrate (at pH 6.25 and 30 degrees Celsius)</Vmax>
        <text evidence="3">kcat is 0.46 sec(-1) with coumaraldehyde as substrate (at pH 6.25 and 30 degrees Celsius) (PubMed:25217505). kcat is 0.10 sec(-1) with coniferaldehyde as substrate (at pH 6.25 and 30 degrees Celsius) (PubMed:25217505). kcat is 0.24 sec(-1) with sinapaldehyde as substrate (at pH 6.25 and 30 degrees Celsius) (PubMed:25217505).</text>
    </kinetics>
</comment>
<comment type="pathway">
    <text evidence="3">Aromatic compound metabolism; phenylpropanoid biosynthesis.</text>
</comment>
<comment type="subcellular location">
    <subcellularLocation>
        <location evidence="1">Cytoplasm</location>
    </subcellularLocation>
</comment>
<comment type="similarity">
    <text evidence="5">Belongs to the NAD(P)-dependent epimerase/dehydratase family. Dihydroflavonol-4-reductase subfamily.</text>
</comment>
<accession>G7IYC1</accession>
<accession>B7FLC2</accession>
<accession>I3T420</accession>
<organism>
    <name type="scientific">Medicago truncatula</name>
    <name type="common">Barrel medic</name>
    <name type="synonym">Medicago tribuloides</name>
    <dbReference type="NCBI Taxonomy" id="3880"/>
    <lineage>
        <taxon>Eukaryota</taxon>
        <taxon>Viridiplantae</taxon>
        <taxon>Streptophyta</taxon>
        <taxon>Embryophyta</taxon>
        <taxon>Tracheophyta</taxon>
        <taxon>Spermatophyta</taxon>
        <taxon>Magnoliopsida</taxon>
        <taxon>eudicotyledons</taxon>
        <taxon>Gunneridae</taxon>
        <taxon>Pentapetalae</taxon>
        <taxon>rosids</taxon>
        <taxon>fabids</taxon>
        <taxon>Fabales</taxon>
        <taxon>Fabaceae</taxon>
        <taxon>Papilionoideae</taxon>
        <taxon>50 kb inversion clade</taxon>
        <taxon>NPAAA clade</taxon>
        <taxon>Hologalegina</taxon>
        <taxon>IRL clade</taxon>
        <taxon>Trifolieae</taxon>
        <taxon>Medicago</taxon>
    </lineage>
</organism>
<reference key="1">
    <citation type="journal article" date="2011" name="Nature">
        <title>The Medicago genome provides insight into the evolution of rhizobial symbioses.</title>
        <authorList>
            <person name="Young N.D."/>
            <person name="Debelle F."/>
            <person name="Oldroyd G.E.D."/>
            <person name="Geurts R."/>
            <person name="Cannon S.B."/>
            <person name="Udvardi M.K."/>
            <person name="Benedito V.A."/>
            <person name="Mayer K.F.X."/>
            <person name="Gouzy J."/>
            <person name="Schoof H."/>
            <person name="Van de Peer Y."/>
            <person name="Proost S."/>
            <person name="Cook D.R."/>
            <person name="Meyers B.C."/>
            <person name="Spannagl M."/>
            <person name="Cheung F."/>
            <person name="De Mita S."/>
            <person name="Krishnakumar V."/>
            <person name="Gundlach H."/>
            <person name="Zhou S."/>
            <person name="Mudge J."/>
            <person name="Bharti A.K."/>
            <person name="Murray J.D."/>
            <person name="Naoumkina M.A."/>
            <person name="Rosen B."/>
            <person name="Silverstein K.A.T."/>
            <person name="Tang H."/>
            <person name="Rombauts S."/>
            <person name="Zhao P.X."/>
            <person name="Zhou P."/>
            <person name="Barbe V."/>
            <person name="Bardou P."/>
            <person name="Bechner M."/>
            <person name="Bellec A."/>
            <person name="Berger A."/>
            <person name="Berges H."/>
            <person name="Bidwell S."/>
            <person name="Bisseling T."/>
            <person name="Choisne N."/>
            <person name="Couloux A."/>
            <person name="Denny R."/>
            <person name="Deshpande S."/>
            <person name="Dai X."/>
            <person name="Doyle J.J."/>
            <person name="Dudez A.-M."/>
            <person name="Farmer A.D."/>
            <person name="Fouteau S."/>
            <person name="Franken C."/>
            <person name="Gibelin C."/>
            <person name="Gish J."/>
            <person name="Goldstein S."/>
            <person name="Gonzalez A.J."/>
            <person name="Green P.J."/>
            <person name="Hallab A."/>
            <person name="Hartog M."/>
            <person name="Hua A."/>
            <person name="Humphray S.J."/>
            <person name="Jeong D.-H."/>
            <person name="Jing Y."/>
            <person name="Jocker A."/>
            <person name="Kenton S.M."/>
            <person name="Kim D.-J."/>
            <person name="Klee K."/>
            <person name="Lai H."/>
            <person name="Lang C."/>
            <person name="Lin S."/>
            <person name="Macmil S.L."/>
            <person name="Magdelenat G."/>
            <person name="Matthews L."/>
            <person name="McCorrison J."/>
            <person name="Monaghan E.L."/>
            <person name="Mun J.-H."/>
            <person name="Najar F.Z."/>
            <person name="Nicholson C."/>
            <person name="Noirot C."/>
            <person name="O'Bleness M."/>
            <person name="Paule C.R."/>
            <person name="Poulain J."/>
            <person name="Prion F."/>
            <person name="Qin B."/>
            <person name="Qu C."/>
            <person name="Retzel E.F."/>
            <person name="Riddle C."/>
            <person name="Sallet E."/>
            <person name="Samain S."/>
            <person name="Samson N."/>
            <person name="Sanders I."/>
            <person name="Saurat O."/>
            <person name="Scarpelli C."/>
            <person name="Schiex T."/>
            <person name="Segurens B."/>
            <person name="Severin A.J."/>
            <person name="Sherrier D.J."/>
            <person name="Shi R."/>
            <person name="Sims S."/>
            <person name="Singer S.R."/>
            <person name="Sinharoy S."/>
            <person name="Sterck L."/>
            <person name="Viollet A."/>
            <person name="Wang B.-B."/>
            <person name="Wang K."/>
            <person name="Wang M."/>
            <person name="Wang X."/>
            <person name="Warfsmann J."/>
            <person name="Weissenbach J."/>
            <person name="White D.D."/>
            <person name="White J.D."/>
            <person name="Wiley G.B."/>
            <person name="Wincker P."/>
            <person name="Xing Y."/>
            <person name="Yang L."/>
            <person name="Yao Z."/>
            <person name="Ying F."/>
            <person name="Zhai J."/>
            <person name="Zhou L."/>
            <person name="Zuber A."/>
            <person name="Denarie J."/>
            <person name="Dixon R.A."/>
            <person name="May G.D."/>
            <person name="Schwartz D.C."/>
            <person name="Rogers J."/>
            <person name="Quetier F."/>
            <person name="Town C.D."/>
            <person name="Roe B.A."/>
        </authorList>
    </citation>
    <scope>NUCLEOTIDE SEQUENCE [LARGE SCALE GENOMIC DNA]</scope>
    <source>
        <strain>cv. Jemalong A17</strain>
    </source>
</reference>
<reference key="2">
    <citation type="journal article" date="2014" name="BMC Genomics">
        <title>An improved genome release (version Mt4.0) for the model legume Medicago truncatula.</title>
        <authorList>
            <person name="Tang H."/>
            <person name="Krishnakumar V."/>
            <person name="Bidwell S."/>
            <person name="Rosen B."/>
            <person name="Chan A."/>
            <person name="Zhou S."/>
            <person name="Gentzbittel L."/>
            <person name="Childs K.L."/>
            <person name="Yandell M."/>
            <person name="Gundlach H."/>
            <person name="Mayer K.F."/>
            <person name="Schwartz D.C."/>
            <person name="Town C.D."/>
        </authorList>
    </citation>
    <scope>GENOME REANNOTATION</scope>
    <source>
        <strain>cv. Jemalong A17</strain>
    </source>
</reference>
<reference key="3">
    <citation type="journal article" date="2018" name="Nat. Plants">
        <title>Whole-genome landscape of Medicago truncatula symbiotic genes.</title>
        <authorList>
            <person name="Pecrix Y."/>
            <person name="Staton S.E."/>
            <person name="Sallet E."/>
            <person name="Lelandais-Briere C."/>
            <person name="Moreau S."/>
            <person name="Carrere S."/>
            <person name="Blein T."/>
            <person name="Jardinaud M.F."/>
            <person name="Latrasse D."/>
            <person name="Zouine M."/>
            <person name="Zahm M."/>
            <person name="Kreplak J."/>
            <person name="Mayjonade B."/>
            <person name="Satge C."/>
            <person name="Perez M."/>
            <person name="Cauet S."/>
            <person name="Marande W."/>
            <person name="Chantry-Darmon C."/>
            <person name="Lopez-Roques C."/>
            <person name="Bouchez O."/>
            <person name="Berard A."/>
            <person name="Debelle F."/>
            <person name="Munos S."/>
            <person name="Bendahmane A."/>
            <person name="Berges H."/>
            <person name="Niebel A."/>
            <person name="Buitink J."/>
            <person name="Frugier F."/>
            <person name="Benhamed M."/>
            <person name="Crespi M."/>
            <person name="Gouzy J."/>
            <person name="Gamas P."/>
        </authorList>
    </citation>
    <scope>NUCLEOTIDE SEQUENCE [LARGE SCALE GENOMIC DNA]</scope>
    <source>
        <strain>cv. Jemalong A17</strain>
    </source>
</reference>
<reference key="4">
    <citation type="submission" date="2008-12" db="EMBL/GenBank/DDBJ databases">
        <title>Medicago truncatula full length cdna cloning project.</title>
        <authorList>
            <person name="Moskal W."/>
            <person name="Chan A."/>
            <person name="Cheung F."/>
            <person name="Xiao Y."/>
            <person name="Town C.D."/>
        </authorList>
    </citation>
    <scope>NUCLEOTIDE SEQUENCE [LARGE SCALE MRNA]</scope>
</reference>
<reference key="5">
    <citation type="submission" date="2012-05" db="EMBL/GenBank/DDBJ databases">
        <authorList>
            <person name="Krishnakumar V."/>
            <person name="Cheung F."/>
            <person name="Xiao Y."/>
            <person name="Chan A."/>
            <person name="Moskal W.A."/>
            <person name="Town C.D."/>
        </authorList>
    </citation>
    <scope>NUCLEOTIDE SEQUENCE [LARGE SCALE MRNA]</scope>
</reference>
<reference key="6">
    <citation type="journal article" date="2014" name="Plant Cell">
        <title>Structural studies of cinnamoyl-CoA reductase and cinnamyl-alcohol dehydrogenase, key enzymes of monolignol biosynthesis.</title>
        <authorList>
            <person name="Pan H."/>
            <person name="Zhou R."/>
            <person name="Louie G.V."/>
            <person name="Muhlemann J.K."/>
            <person name="Bomati E.K."/>
            <person name="Bowman M.E."/>
            <person name="Dudareva N."/>
            <person name="Dixon R.A."/>
            <person name="Noel J.P."/>
            <person name="Wang X."/>
        </authorList>
    </citation>
    <scope>X-RAY CRYSTALLOGRAPHY (1.90 ANGSTROMS) OF 8-326</scope>
    <scope>FUNCTION</scope>
    <scope>MUTAGENESIS OF SER-130; TYR-136; TYR-165; LYS-169 AND PHE-226</scope>
    <scope>CATALYTIC ACTIVITY</scope>
    <scope>PATHWAY</scope>
    <scope>BIOPHYSICOCHEMICAL PROPERTIES</scope>
</reference>
<gene>
    <name evidence="4" type="primary">CAD2</name>
    <name evidence="7" type="ordered locus">MTR_3g005170</name>
    <name evidence="8" type="ORF">MtrunA17_Chr3g0077221</name>
</gene>